<gene>
    <name type="primary">NOP5-2</name>
    <name type="synonym">NOP58-2</name>
    <name type="ordered locus">At3g05060</name>
    <name type="ORF">T12H1.2</name>
</gene>
<accession>Q9MAB3</accession>
<name>NOP5B_ARATH</name>
<comment type="function">
    <text evidence="1">Required for 60S ribosomal subunit biogenesis.</text>
</comment>
<comment type="subcellular location">
    <subcellularLocation>
        <location evidence="1">Nucleus</location>
        <location evidence="1">Nucleolus</location>
    </subcellularLocation>
</comment>
<comment type="similarity">
    <text evidence="4">Belongs to the NOP5/NOP56 family.</text>
</comment>
<feature type="chain" id="PRO_0000287348" description="Probable nucleolar protein 5-2">
    <location>
        <begin position="1"/>
        <end position="533"/>
    </location>
</feature>
<feature type="domain" description="Nop" evidence="2">
    <location>
        <begin position="281"/>
        <end position="399"/>
    </location>
</feature>
<feature type="region of interest" description="Disordered" evidence="3">
    <location>
        <begin position="401"/>
        <end position="433"/>
    </location>
</feature>
<feature type="region of interest" description="Disordered" evidence="3">
    <location>
        <begin position="445"/>
        <end position="533"/>
    </location>
</feature>
<feature type="compositionally biased region" description="Basic and acidic residues" evidence="3">
    <location>
        <begin position="413"/>
        <end position="424"/>
    </location>
</feature>
<feature type="compositionally biased region" description="Basic residues" evidence="3">
    <location>
        <begin position="521"/>
        <end position="533"/>
    </location>
</feature>
<sequence>MVLVLYETAAGFALFKVKDEGKMANVEDLCKEFDTPDSARKMVKLKAFEKFDNTSEALEAVAKLLEGAPSKGLRKFLKANCQGETLAVADSKLGNVIKEKLKIDCIHNNAVMELLRGVRSQFTELISGLGDQDLAPMSLGLSHSLARYKLKFSSDKVDTMIIQAIGLLDDLDKELNTYAMRVREWYGWHFPELAKIISDNILYAKSVKLMGNRVNAAKLDFSEILADEIEADLKDAAVISMGTEVSDLDLLHIRELCDQVLSLSEYRAQLYDYLKSRMNTIAPNLTALVGELVGARLISHGGSLLNLSKQPGSTVQILGAEKALFRALKTKHATPKYGLIFHASLVGQAAPKHKGKISRSLAAKTVLAIRVDALGDSQDNTMGLENRAKLEARLRNLEGKDLGRLSGSSKGKPKIEVYNKDKKMGSGGLITPAKTYNTAADSLLGETSAKSEEPSKKKDKKKKKKVEEEKPEEEEPSEKKKKKKAEAETEAVVEVAKEEKKKNKKKRKHEEEETTETPAKKKDKKEKKKKSKD</sequence>
<proteinExistence type="evidence at protein level"/>
<protein>
    <recommendedName>
        <fullName>Probable nucleolar protein 5-2</fullName>
    </recommendedName>
    <alternativeName>
        <fullName>MAR-binding NOP56/58 homolog 2</fullName>
    </alternativeName>
    <alternativeName>
        <fullName>Nucleolar protein 58-2</fullName>
    </alternativeName>
</protein>
<dbReference type="EMBL" id="AF302491">
    <property type="protein sequence ID" value="AAG40837.1"/>
    <property type="molecule type" value="mRNA"/>
</dbReference>
<dbReference type="EMBL" id="AC009177">
    <property type="protein sequence ID" value="AAF27012.1"/>
    <property type="molecule type" value="Genomic_DNA"/>
</dbReference>
<dbReference type="EMBL" id="CP002686">
    <property type="protein sequence ID" value="AEE74181.1"/>
    <property type="molecule type" value="Genomic_DNA"/>
</dbReference>
<dbReference type="EMBL" id="AF412080">
    <property type="protein sequence ID" value="AAL06533.1"/>
    <property type="molecule type" value="mRNA"/>
</dbReference>
<dbReference type="RefSeq" id="NP_187157.1">
    <property type="nucleotide sequence ID" value="NM_111378.4"/>
</dbReference>
<dbReference type="SMR" id="Q9MAB3"/>
<dbReference type="BioGRID" id="5003">
    <property type="interactions" value="43"/>
</dbReference>
<dbReference type="FunCoup" id="Q9MAB3">
    <property type="interactions" value="4349"/>
</dbReference>
<dbReference type="IntAct" id="Q9MAB3">
    <property type="interactions" value="5"/>
</dbReference>
<dbReference type="STRING" id="3702.Q9MAB3"/>
<dbReference type="iPTMnet" id="Q9MAB3"/>
<dbReference type="MetOSite" id="Q9MAB3"/>
<dbReference type="PaxDb" id="3702-AT3G05060.1"/>
<dbReference type="ProteomicsDB" id="250540"/>
<dbReference type="EnsemblPlants" id="AT3G05060.1">
    <property type="protein sequence ID" value="AT3G05060.1"/>
    <property type="gene ID" value="AT3G05060"/>
</dbReference>
<dbReference type="GeneID" id="819668"/>
<dbReference type="Gramene" id="AT3G05060.1">
    <property type="protein sequence ID" value="AT3G05060.1"/>
    <property type="gene ID" value="AT3G05060"/>
</dbReference>
<dbReference type="KEGG" id="ath:AT3G05060"/>
<dbReference type="Araport" id="AT3G05060"/>
<dbReference type="TAIR" id="AT3G05060"/>
<dbReference type="eggNOG" id="KOG2572">
    <property type="taxonomic scope" value="Eukaryota"/>
</dbReference>
<dbReference type="HOGENOM" id="CLU_015495_5_2_1"/>
<dbReference type="InParanoid" id="Q9MAB3"/>
<dbReference type="OMA" id="MGMRSNW"/>
<dbReference type="OrthoDB" id="6780543at2759"/>
<dbReference type="PhylomeDB" id="Q9MAB3"/>
<dbReference type="CD-CODE" id="4299E36E">
    <property type="entry name" value="Nucleolus"/>
</dbReference>
<dbReference type="PRO" id="PR:Q9MAB3"/>
<dbReference type="Proteomes" id="UP000006548">
    <property type="component" value="Chromosome 3"/>
</dbReference>
<dbReference type="ExpressionAtlas" id="Q9MAB3">
    <property type="expression patterns" value="baseline and differential"/>
</dbReference>
<dbReference type="GO" id="GO:0031428">
    <property type="term" value="C:box C/D methylation guide snoRNP complex"/>
    <property type="evidence" value="ECO:0007669"/>
    <property type="project" value="InterPro"/>
</dbReference>
<dbReference type="GO" id="GO:0005730">
    <property type="term" value="C:nucleolus"/>
    <property type="evidence" value="ECO:0007005"/>
    <property type="project" value="TAIR"/>
</dbReference>
<dbReference type="GO" id="GO:0032040">
    <property type="term" value="C:small-subunit processome"/>
    <property type="evidence" value="ECO:0007669"/>
    <property type="project" value="InterPro"/>
</dbReference>
<dbReference type="GO" id="GO:0003729">
    <property type="term" value="F:mRNA binding"/>
    <property type="evidence" value="ECO:0000314"/>
    <property type="project" value="TAIR"/>
</dbReference>
<dbReference type="GO" id="GO:0030515">
    <property type="term" value="F:snoRNA binding"/>
    <property type="evidence" value="ECO:0007669"/>
    <property type="project" value="InterPro"/>
</dbReference>
<dbReference type="GO" id="GO:0042254">
    <property type="term" value="P:ribosome biogenesis"/>
    <property type="evidence" value="ECO:0007669"/>
    <property type="project" value="UniProtKB-KW"/>
</dbReference>
<dbReference type="FunFam" id="1.10.246.90:FF:000004">
    <property type="entry name" value="Nucleolar protein 58"/>
    <property type="match status" value="1"/>
</dbReference>
<dbReference type="FunFam" id="1.10.287.4070:FF:000001">
    <property type="entry name" value="Probable Nucleolar protein 58"/>
    <property type="match status" value="1"/>
</dbReference>
<dbReference type="Gene3D" id="1.10.287.4070">
    <property type="match status" value="1"/>
</dbReference>
<dbReference type="Gene3D" id="1.10.246.90">
    <property type="entry name" value="Nop domain"/>
    <property type="match status" value="1"/>
</dbReference>
<dbReference type="InterPro" id="IPR045056">
    <property type="entry name" value="Nop56/Nop58"/>
</dbReference>
<dbReference type="InterPro" id="IPR012974">
    <property type="entry name" value="NOP58/56_N"/>
</dbReference>
<dbReference type="InterPro" id="IPR042239">
    <property type="entry name" value="Nop_C"/>
</dbReference>
<dbReference type="InterPro" id="IPR002687">
    <property type="entry name" value="Nop_dom"/>
</dbReference>
<dbReference type="InterPro" id="IPR036070">
    <property type="entry name" value="Nop_dom_sf"/>
</dbReference>
<dbReference type="InterPro" id="IPR012976">
    <property type="entry name" value="NOSIC"/>
</dbReference>
<dbReference type="PANTHER" id="PTHR10894">
    <property type="entry name" value="NUCLEOLAR PROTEIN 5 NUCLEOLAR PROTEIN NOP5 NOP58"/>
    <property type="match status" value="1"/>
</dbReference>
<dbReference type="PANTHER" id="PTHR10894:SF1">
    <property type="entry name" value="NUCLEOLAR PROTEIN 58"/>
    <property type="match status" value="1"/>
</dbReference>
<dbReference type="Pfam" id="PF01798">
    <property type="entry name" value="Nop"/>
    <property type="match status" value="1"/>
</dbReference>
<dbReference type="Pfam" id="PF08156">
    <property type="entry name" value="NOP5NT"/>
    <property type="match status" value="1"/>
</dbReference>
<dbReference type="SMART" id="SM00931">
    <property type="entry name" value="NOSIC"/>
    <property type="match status" value="1"/>
</dbReference>
<dbReference type="SUPFAM" id="SSF89124">
    <property type="entry name" value="Nop domain"/>
    <property type="match status" value="1"/>
</dbReference>
<dbReference type="PROSITE" id="PS51358">
    <property type="entry name" value="NOP"/>
    <property type="match status" value="1"/>
</dbReference>
<evidence type="ECO:0000250" key="1"/>
<evidence type="ECO:0000255" key="2">
    <source>
        <dbReference type="PROSITE-ProRule" id="PRU00690"/>
    </source>
</evidence>
<evidence type="ECO:0000256" key="3">
    <source>
        <dbReference type="SAM" id="MobiDB-lite"/>
    </source>
</evidence>
<evidence type="ECO:0000305" key="4"/>
<organism>
    <name type="scientific">Arabidopsis thaliana</name>
    <name type="common">Mouse-ear cress</name>
    <dbReference type="NCBI Taxonomy" id="3702"/>
    <lineage>
        <taxon>Eukaryota</taxon>
        <taxon>Viridiplantae</taxon>
        <taxon>Streptophyta</taxon>
        <taxon>Embryophyta</taxon>
        <taxon>Tracheophyta</taxon>
        <taxon>Spermatophyta</taxon>
        <taxon>Magnoliopsida</taxon>
        <taxon>eudicotyledons</taxon>
        <taxon>Gunneridae</taxon>
        <taxon>Pentapetalae</taxon>
        <taxon>rosids</taxon>
        <taxon>malvids</taxon>
        <taxon>Brassicales</taxon>
        <taxon>Brassicaceae</taxon>
        <taxon>Camelineae</taxon>
        <taxon>Arabidopsis</taxon>
    </lineage>
</organism>
<reference key="1">
    <citation type="submission" date="2000-09" db="EMBL/GenBank/DDBJ databases">
        <title>Arabidopsis MAR binding NOP56/58 homologs.</title>
        <authorList>
            <person name="Phelan T.J."/>
            <person name="Spiker S.L."/>
        </authorList>
    </citation>
    <scope>NUCLEOTIDE SEQUENCE [MRNA]</scope>
</reference>
<reference key="2">
    <citation type="journal article" date="2000" name="Nature">
        <title>Sequence and analysis of chromosome 3 of the plant Arabidopsis thaliana.</title>
        <authorList>
            <person name="Salanoubat M."/>
            <person name="Lemcke K."/>
            <person name="Rieger M."/>
            <person name="Ansorge W."/>
            <person name="Unseld M."/>
            <person name="Fartmann B."/>
            <person name="Valle G."/>
            <person name="Bloecker H."/>
            <person name="Perez-Alonso M."/>
            <person name="Obermaier B."/>
            <person name="Delseny M."/>
            <person name="Boutry M."/>
            <person name="Grivell L.A."/>
            <person name="Mache R."/>
            <person name="Puigdomenech P."/>
            <person name="De Simone V."/>
            <person name="Choisne N."/>
            <person name="Artiguenave F."/>
            <person name="Robert C."/>
            <person name="Brottier P."/>
            <person name="Wincker P."/>
            <person name="Cattolico L."/>
            <person name="Weissenbach J."/>
            <person name="Saurin W."/>
            <person name="Quetier F."/>
            <person name="Schaefer M."/>
            <person name="Mueller-Auer S."/>
            <person name="Gabel C."/>
            <person name="Fuchs M."/>
            <person name="Benes V."/>
            <person name="Wurmbach E."/>
            <person name="Drzonek H."/>
            <person name="Erfle H."/>
            <person name="Jordan N."/>
            <person name="Bangert S."/>
            <person name="Wiedelmann R."/>
            <person name="Kranz H."/>
            <person name="Voss H."/>
            <person name="Holland R."/>
            <person name="Brandt P."/>
            <person name="Nyakatura G."/>
            <person name="Vezzi A."/>
            <person name="D'Angelo M."/>
            <person name="Pallavicini A."/>
            <person name="Toppo S."/>
            <person name="Simionati B."/>
            <person name="Conrad A."/>
            <person name="Hornischer K."/>
            <person name="Kauer G."/>
            <person name="Loehnert T.-H."/>
            <person name="Nordsiek G."/>
            <person name="Reichelt J."/>
            <person name="Scharfe M."/>
            <person name="Schoen O."/>
            <person name="Bargues M."/>
            <person name="Terol J."/>
            <person name="Climent J."/>
            <person name="Navarro P."/>
            <person name="Collado C."/>
            <person name="Perez-Perez A."/>
            <person name="Ottenwaelder B."/>
            <person name="Duchemin D."/>
            <person name="Cooke R."/>
            <person name="Laudie M."/>
            <person name="Berger-Llauro C."/>
            <person name="Purnelle B."/>
            <person name="Masuy D."/>
            <person name="de Haan M."/>
            <person name="Maarse A.C."/>
            <person name="Alcaraz J.-P."/>
            <person name="Cottet A."/>
            <person name="Casacuberta E."/>
            <person name="Monfort A."/>
            <person name="Argiriou A."/>
            <person name="Flores M."/>
            <person name="Liguori R."/>
            <person name="Vitale D."/>
            <person name="Mannhaupt G."/>
            <person name="Haase D."/>
            <person name="Schoof H."/>
            <person name="Rudd S."/>
            <person name="Zaccaria P."/>
            <person name="Mewes H.-W."/>
            <person name="Mayer K.F.X."/>
            <person name="Kaul S."/>
            <person name="Town C.D."/>
            <person name="Koo H.L."/>
            <person name="Tallon L.J."/>
            <person name="Jenkins J."/>
            <person name="Rooney T."/>
            <person name="Rizzo M."/>
            <person name="Walts A."/>
            <person name="Utterback T."/>
            <person name="Fujii C.Y."/>
            <person name="Shea T.P."/>
            <person name="Creasy T.H."/>
            <person name="Haas B."/>
            <person name="Maiti R."/>
            <person name="Wu D."/>
            <person name="Peterson J."/>
            <person name="Van Aken S."/>
            <person name="Pai G."/>
            <person name="Militscher J."/>
            <person name="Sellers P."/>
            <person name="Gill J.E."/>
            <person name="Feldblyum T.V."/>
            <person name="Preuss D."/>
            <person name="Lin X."/>
            <person name="Nierman W.C."/>
            <person name="Salzberg S.L."/>
            <person name="White O."/>
            <person name="Venter J.C."/>
            <person name="Fraser C.M."/>
            <person name="Kaneko T."/>
            <person name="Nakamura Y."/>
            <person name="Sato S."/>
            <person name="Kato T."/>
            <person name="Asamizu E."/>
            <person name="Sasamoto S."/>
            <person name="Kimura T."/>
            <person name="Idesawa K."/>
            <person name="Kawashima K."/>
            <person name="Kishida Y."/>
            <person name="Kiyokawa C."/>
            <person name="Kohara M."/>
            <person name="Matsumoto M."/>
            <person name="Matsuno A."/>
            <person name="Muraki A."/>
            <person name="Nakayama S."/>
            <person name="Nakazaki N."/>
            <person name="Shinpo S."/>
            <person name="Takeuchi C."/>
            <person name="Wada T."/>
            <person name="Watanabe A."/>
            <person name="Yamada M."/>
            <person name="Yasuda M."/>
            <person name="Tabata S."/>
        </authorList>
    </citation>
    <scope>NUCLEOTIDE SEQUENCE [LARGE SCALE GENOMIC DNA]</scope>
    <source>
        <strain>cv. Columbia</strain>
    </source>
</reference>
<reference key="3">
    <citation type="journal article" date="2017" name="Plant J.">
        <title>Araport11: a complete reannotation of the Arabidopsis thaliana reference genome.</title>
        <authorList>
            <person name="Cheng C.Y."/>
            <person name="Krishnakumar V."/>
            <person name="Chan A.P."/>
            <person name="Thibaud-Nissen F."/>
            <person name="Schobel S."/>
            <person name="Town C.D."/>
        </authorList>
    </citation>
    <scope>GENOME REANNOTATION</scope>
    <source>
        <strain>cv. Columbia</strain>
    </source>
</reference>
<reference key="4">
    <citation type="journal article" date="2003" name="Science">
        <title>Empirical analysis of transcriptional activity in the Arabidopsis genome.</title>
        <authorList>
            <person name="Yamada K."/>
            <person name="Lim J."/>
            <person name="Dale J.M."/>
            <person name="Chen H."/>
            <person name="Shinn P."/>
            <person name="Palm C.J."/>
            <person name="Southwick A.M."/>
            <person name="Wu H.C."/>
            <person name="Kim C.J."/>
            <person name="Nguyen M."/>
            <person name="Pham P.K."/>
            <person name="Cheuk R.F."/>
            <person name="Karlin-Newmann G."/>
            <person name="Liu S.X."/>
            <person name="Lam B."/>
            <person name="Sakano H."/>
            <person name="Wu T."/>
            <person name="Yu G."/>
            <person name="Miranda M."/>
            <person name="Quach H.L."/>
            <person name="Tripp M."/>
            <person name="Chang C.H."/>
            <person name="Lee J.M."/>
            <person name="Toriumi M.J."/>
            <person name="Chan M.M."/>
            <person name="Tang C.C."/>
            <person name="Onodera C.S."/>
            <person name="Deng J.M."/>
            <person name="Akiyama K."/>
            <person name="Ansari Y."/>
            <person name="Arakawa T."/>
            <person name="Banh J."/>
            <person name="Banno F."/>
            <person name="Bowser L."/>
            <person name="Brooks S.Y."/>
            <person name="Carninci P."/>
            <person name="Chao Q."/>
            <person name="Choy N."/>
            <person name="Enju A."/>
            <person name="Goldsmith A.D."/>
            <person name="Gurjal M."/>
            <person name="Hansen N.F."/>
            <person name="Hayashizaki Y."/>
            <person name="Johnson-Hopson C."/>
            <person name="Hsuan V.W."/>
            <person name="Iida K."/>
            <person name="Karnes M."/>
            <person name="Khan S."/>
            <person name="Koesema E."/>
            <person name="Ishida J."/>
            <person name="Jiang P.X."/>
            <person name="Jones T."/>
            <person name="Kawai J."/>
            <person name="Kamiya A."/>
            <person name="Meyers C."/>
            <person name="Nakajima M."/>
            <person name="Narusaka M."/>
            <person name="Seki M."/>
            <person name="Sakurai T."/>
            <person name="Satou M."/>
            <person name="Tamse R."/>
            <person name="Vaysberg M."/>
            <person name="Wallender E.K."/>
            <person name="Wong C."/>
            <person name="Yamamura Y."/>
            <person name="Yuan S."/>
            <person name="Shinozaki K."/>
            <person name="Davis R.W."/>
            <person name="Theologis A."/>
            <person name="Ecker J.R."/>
        </authorList>
    </citation>
    <scope>NUCLEOTIDE SEQUENCE [LARGE SCALE MRNA]</scope>
    <source>
        <strain>cv. Columbia</strain>
    </source>
</reference>
<reference key="5">
    <citation type="journal article" date="2007" name="Mol. Cell. Proteomics">
        <title>Multidimensional protein identification technology (MudPIT) analysis of ubiquitinated proteins in plants.</title>
        <authorList>
            <person name="Maor R."/>
            <person name="Jones A."/>
            <person name="Nuehse T.S."/>
            <person name="Studholme D.J."/>
            <person name="Peck S.C."/>
            <person name="Shirasu K."/>
        </authorList>
    </citation>
    <scope>IDENTIFICATION BY MASS SPECTROMETRY [LARGE SCALE ANALYSIS]</scope>
    <source>
        <strain>cv. Landsberg erecta</strain>
    </source>
</reference>
<keyword id="KW-0539">Nucleus</keyword>
<keyword id="KW-1185">Reference proteome</keyword>
<keyword id="KW-0690">Ribosome biogenesis</keyword>